<proteinExistence type="evidence at protein level"/>
<sequence>MERDEYQLPNSHGKNTFLSRIFGLQSDEVNPSLNSQEMSNFPLPDIERGSSLLHSTNDSREDVDENDLRVPESDQGTSTEEEDEVDEEQVQAYAPQISDGLDGDHQLNSVTSKENVLETEKSNLERLVEGSTDDSVPKVGQLSSEEEEDNEFINNDGFDDDTPLFQKSKIHEFSSKKSNTIEDGKRPLFFRHILQNNRPQRDTQKLFTSSNAIHHDKDKSANNGPRNINGNQKHGTKYFGSATQPRFTGSPLNNTNRFTKLFPLRKPNLLSNISVLNNTPEDRINTLSVKERALWKWANVENLDIFLQDVYNYYLGNGFYCIILEKILNICTLLFVVFVSTYMGHCVDYSKLPTSHRVSDIIIDKCYSNSITGFTKFFLWMFYFFVILKIVQLYFDVQKLSELQNFYKYLLNISDDELQTLPWQNVIQQLMYLKDQNAMTANVVEVKAKNRIDAHDVANRIMRRENYLIALYNSDILNLSLPIPLFRTNVLTKTLEWNINLCVMGFVFNESGFIKQSILKPSQREFTREELQKRFMLAGFLNIILAPFLVTYFVLLYFFRYFNEYKTSPGSIGARQYTPIAEWKFREYNELYHIFKKRISLSTTLANKYVDQFPKEKTNLFLKFVSFICGSFVAILAFLTVFDPENFLNFEITSDRSVIFYITILGAIWSVSRNTITQEYHVFDPEETLKELYEYTHYLPKEWEGRYHKEEIKLEFCKLYNLRIVILLRELTSLMITPFVLWFSLPSSAGRIVDFFRENSEYVDGLGYVCKYAMFNMKNIDGEDTHSMDEDSLTKKIAVNGSHTLNSKRRSKFTAEDHSDKDLANNKMLQSYVYFMDDYSNSENLTGKYQLPAKKGYPNNEGDSFLNNKYSWRKQFQPGQKPELFRIGKHALGPGHNISPAIYSTRNPGKNWDNNNNGDDIKNGTNNATAKNDDNNGNNDHEYVLTESFLDSGAFPNHDVIDHNKMLNSNYNGNGILNKGGVLGLVKEYYKKSDVGR</sequence>
<protein>
    <recommendedName>
        <fullName evidence="52">Autophagy-related protein 9</fullName>
    </recommendedName>
    <alternativeName>
        <fullName evidence="53">Cytoplasm to vacuole targeting protein 7</fullName>
    </alternativeName>
</protein>
<reference key="1">
    <citation type="journal article" date="1996" name="Yeast">
        <title>Analysis of a 23 kb region on the left arm of yeast chromosome IV.</title>
        <authorList>
            <person name="Delaveau T.T.D."/>
            <person name="Blugeon C."/>
            <person name="Jacq C."/>
            <person name="Perea J."/>
        </authorList>
    </citation>
    <scope>NUCLEOTIDE SEQUENCE [GENOMIC DNA]</scope>
</reference>
<reference key="2">
    <citation type="journal article" date="1997" name="Nature">
        <title>The nucleotide sequence of Saccharomyces cerevisiae chromosome IV.</title>
        <authorList>
            <person name="Jacq C."/>
            <person name="Alt-Moerbe J."/>
            <person name="Andre B."/>
            <person name="Arnold W."/>
            <person name="Bahr A."/>
            <person name="Ballesta J.P.G."/>
            <person name="Bargues M."/>
            <person name="Baron L."/>
            <person name="Becker A."/>
            <person name="Biteau N."/>
            <person name="Bloecker H."/>
            <person name="Blugeon C."/>
            <person name="Boskovic J."/>
            <person name="Brandt P."/>
            <person name="Brueckner M."/>
            <person name="Buitrago M.J."/>
            <person name="Coster F."/>
            <person name="Delaveau T."/>
            <person name="del Rey F."/>
            <person name="Dujon B."/>
            <person name="Eide L.G."/>
            <person name="Garcia-Cantalejo J.M."/>
            <person name="Goffeau A."/>
            <person name="Gomez-Peris A."/>
            <person name="Granotier C."/>
            <person name="Hanemann V."/>
            <person name="Hankeln T."/>
            <person name="Hoheisel J.D."/>
            <person name="Jaeger W."/>
            <person name="Jimenez A."/>
            <person name="Jonniaux J.-L."/>
            <person name="Kraemer C."/>
            <person name="Kuester H."/>
            <person name="Laamanen P."/>
            <person name="Legros Y."/>
            <person name="Louis E.J."/>
            <person name="Moeller-Rieker S."/>
            <person name="Monnet A."/>
            <person name="Moro M."/>
            <person name="Mueller-Auer S."/>
            <person name="Nussbaumer B."/>
            <person name="Paricio N."/>
            <person name="Paulin L."/>
            <person name="Perea J."/>
            <person name="Perez-Alonso M."/>
            <person name="Perez-Ortin J.E."/>
            <person name="Pohl T.M."/>
            <person name="Prydz H."/>
            <person name="Purnelle B."/>
            <person name="Rasmussen S.W."/>
            <person name="Remacha M.A."/>
            <person name="Revuelta J.L."/>
            <person name="Rieger M."/>
            <person name="Salom D."/>
            <person name="Saluz H.P."/>
            <person name="Saiz J.E."/>
            <person name="Saren A.-M."/>
            <person name="Schaefer M."/>
            <person name="Scharfe M."/>
            <person name="Schmidt E.R."/>
            <person name="Schneider C."/>
            <person name="Scholler P."/>
            <person name="Schwarz S."/>
            <person name="Soler-Mira A."/>
            <person name="Urrestarazu L.A."/>
            <person name="Verhasselt P."/>
            <person name="Vissers S."/>
            <person name="Voet M."/>
            <person name="Volckaert G."/>
            <person name="Wagner G."/>
            <person name="Wambutt R."/>
            <person name="Wedler E."/>
            <person name="Wedler H."/>
            <person name="Woelfl S."/>
            <person name="Harris D.E."/>
            <person name="Bowman S."/>
            <person name="Brown D."/>
            <person name="Churcher C.M."/>
            <person name="Connor R."/>
            <person name="Dedman K."/>
            <person name="Gentles S."/>
            <person name="Hamlin N."/>
            <person name="Hunt S."/>
            <person name="Jones L."/>
            <person name="McDonald S."/>
            <person name="Murphy L.D."/>
            <person name="Niblett D."/>
            <person name="Odell C."/>
            <person name="Oliver K."/>
            <person name="Rajandream M.A."/>
            <person name="Richards C."/>
            <person name="Shore L."/>
            <person name="Walsh S.V."/>
            <person name="Barrell B.G."/>
            <person name="Dietrich F.S."/>
            <person name="Mulligan J.T."/>
            <person name="Allen E."/>
            <person name="Araujo R."/>
            <person name="Aviles E."/>
            <person name="Berno A."/>
            <person name="Carpenter J."/>
            <person name="Chen E."/>
            <person name="Cherry J.M."/>
            <person name="Chung E."/>
            <person name="Duncan M."/>
            <person name="Hunicke-Smith S."/>
            <person name="Hyman R.W."/>
            <person name="Komp C."/>
            <person name="Lashkari D."/>
            <person name="Lew H."/>
            <person name="Lin D."/>
            <person name="Mosedale D."/>
            <person name="Nakahara K."/>
            <person name="Namath A."/>
            <person name="Oefner P."/>
            <person name="Oh C."/>
            <person name="Petel F.X."/>
            <person name="Roberts D."/>
            <person name="Schramm S."/>
            <person name="Schroeder M."/>
            <person name="Shogren T."/>
            <person name="Shroff N."/>
            <person name="Winant A."/>
            <person name="Yelton M.A."/>
            <person name="Botstein D."/>
            <person name="Davis R.W."/>
            <person name="Johnston M."/>
            <person name="Andrews S."/>
            <person name="Brinkman R."/>
            <person name="Cooper J."/>
            <person name="Ding H."/>
            <person name="Du Z."/>
            <person name="Favello A."/>
            <person name="Fulton L."/>
            <person name="Gattung S."/>
            <person name="Greco T."/>
            <person name="Hallsworth K."/>
            <person name="Hawkins J."/>
            <person name="Hillier L.W."/>
            <person name="Jier M."/>
            <person name="Johnson D."/>
            <person name="Johnston L."/>
            <person name="Kirsten J."/>
            <person name="Kucaba T."/>
            <person name="Langston Y."/>
            <person name="Latreille P."/>
            <person name="Le T."/>
            <person name="Mardis E."/>
            <person name="Menezes S."/>
            <person name="Miller N."/>
            <person name="Nhan M."/>
            <person name="Pauley A."/>
            <person name="Peluso D."/>
            <person name="Rifkin L."/>
            <person name="Riles L."/>
            <person name="Taich A."/>
            <person name="Trevaskis E."/>
            <person name="Vignati D."/>
            <person name="Wilcox L."/>
            <person name="Wohldman P."/>
            <person name="Vaudin M."/>
            <person name="Wilson R."/>
            <person name="Waterston R."/>
            <person name="Albermann K."/>
            <person name="Hani J."/>
            <person name="Heumann K."/>
            <person name="Kleine K."/>
            <person name="Mewes H.-W."/>
            <person name="Zollner A."/>
            <person name="Zaccaria P."/>
        </authorList>
    </citation>
    <scope>NUCLEOTIDE SEQUENCE [LARGE SCALE GENOMIC DNA]</scope>
    <source>
        <strain>ATCC 204508 / S288c</strain>
    </source>
</reference>
<reference key="3">
    <citation type="journal article" date="2014" name="G3 (Bethesda)">
        <title>The reference genome sequence of Saccharomyces cerevisiae: Then and now.</title>
        <authorList>
            <person name="Engel S.R."/>
            <person name="Dietrich F.S."/>
            <person name="Fisk D.G."/>
            <person name="Binkley G."/>
            <person name="Balakrishnan R."/>
            <person name="Costanzo M.C."/>
            <person name="Dwight S.S."/>
            <person name="Hitz B.C."/>
            <person name="Karra K."/>
            <person name="Nash R.S."/>
            <person name="Weng S."/>
            <person name="Wong E.D."/>
            <person name="Lloyd P."/>
            <person name="Skrzypek M.S."/>
            <person name="Miyasato S.R."/>
            <person name="Simison M."/>
            <person name="Cherry J.M."/>
        </authorList>
    </citation>
    <scope>GENOME REANNOTATION</scope>
    <source>
        <strain>ATCC 204508 / S288c</strain>
    </source>
</reference>
<reference key="4">
    <citation type="journal article" date="1993" name="FEBS Lett.">
        <title>Isolation and characterization of autophagy-defective mutants of Saccharomyces cerevisiae.</title>
        <authorList>
            <person name="Tsukada M."/>
            <person name="Ohsumi Y."/>
        </authorList>
    </citation>
    <scope>FUNCTION</scope>
</reference>
<reference key="5">
    <citation type="journal article" date="1995" name="J. Cell Biol.">
        <title>Isolation and characterization of yeast mutants in the cytoplasm to vacuole protein targeting pathway.</title>
        <authorList>
            <person name="Harding T.M."/>
            <person name="Morano K.A."/>
            <person name="Scott S.V."/>
            <person name="Klionsky D.J."/>
        </authorList>
    </citation>
    <scope>FUNCTION</scope>
</reference>
<reference key="6">
    <citation type="journal article" date="1996" name="J. Biol. Chem.">
        <title>Genetic and phenotypic overlap between autophagy and the cytoplasm to vacuole protein targeting pathway.</title>
        <authorList>
            <person name="Harding T.M."/>
            <person name="Hefner-Gravink A."/>
            <person name="Thumm M."/>
            <person name="Klionsky D.J."/>
        </authorList>
    </citation>
    <scope>FUNCTION</scope>
</reference>
<reference key="7">
    <citation type="journal article" date="2000" name="J. Bacteriol.">
        <title>Autophagy and the cvt pathway both depend on AUT9.</title>
        <authorList>
            <person name="Lang T."/>
            <person name="Reiche S."/>
            <person name="Straub M."/>
            <person name="Bredschneider M."/>
            <person name="Thumm M."/>
        </authorList>
    </citation>
    <scope>FUNCTION</scope>
    <scope>SUBCELLULAR LOCATION</scope>
</reference>
<reference key="8">
    <citation type="journal article" date="2000" name="J. Cell Biol.">
        <title>Apg9p/Cvt7p is an integral membrane protein required for transport vesicle formation in the Cvt and autophagy pathways.</title>
        <authorList>
            <person name="Noda T."/>
            <person name="Kim J."/>
            <person name="Huang W.-P."/>
            <person name="Baba M."/>
            <person name="Tokunaga C."/>
            <person name="Ohsumi Y."/>
            <person name="Klionsky D.J."/>
        </authorList>
    </citation>
    <scope>FUNCTION</scope>
    <scope>SUBCELLULAR LOCATION</scope>
</reference>
<reference key="9">
    <citation type="journal article" date="2001" name="EMBO J.">
        <title>The pre-autophagosomal structure organized by concerted functions of APG genes is essential for autophagosome formation.</title>
        <authorList>
            <person name="Suzuki K."/>
            <person name="Kirisako T."/>
            <person name="Kamada Y."/>
            <person name="Mizushima N."/>
            <person name="Noda T."/>
            <person name="Ohsumi Y."/>
        </authorList>
    </citation>
    <scope>FUNCTION</scope>
</reference>
<reference key="10">
    <citation type="journal article" date="2001" name="J. Biol. Chem.">
        <title>Apg2 is a novel protein required for the cytoplasm to vacuole targeting, autophagy, and pexophagy pathways.</title>
        <authorList>
            <person name="Wang C.-W."/>
            <person name="Kim J."/>
            <person name="Huang W.-P."/>
            <person name="Abeliovich H."/>
            <person name="Stromhaug P.E."/>
            <person name="Dunn W.A. Jr."/>
            <person name="Klionsky D.J."/>
        </authorList>
    </citation>
    <scope>INTERACTION WITH ATG2</scope>
</reference>
<reference key="11">
    <citation type="journal article" date="2003" name="Dev. Cell">
        <title>A unified nomenclature for yeast autophagy-related genes.</title>
        <authorList>
            <person name="Klionsky D.J."/>
            <person name="Cregg J.M."/>
            <person name="Dunn W.A. Jr."/>
            <person name="Emr S.D."/>
            <person name="Sakai Y."/>
            <person name="Sandoval I.V."/>
            <person name="Sibirny A."/>
            <person name="Subramani S."/>
            <person name="Thumm M."/>
            <person name="Veenhuis M."/>
            <person name="Ohsumi Y."/>
        </authorList>
    </citation>
    <scope>NOMENCLATURE</scope>
</reference>
<reference key="12">
    <citation type="journal article" date="2003" name="J. Biol. Chem.">
        <title>Atg23 is essential for the cytoplasm to vacuole targeting pathway and efficient autophagy but not pexophagy.</title>
        <authorList>
            <person name="Tucker K.A."/>
            <person name="Reggiori F."/>
            <person name="Dunn W.A. Jr."/>
            <person name="Klionsky D.J."/>
        </authorList>
    </citation>
    <scope>FUNCTION</scope>
    <scope>INTERACTION WITH ATG23</scope>
</reference>
<reference key="13">
    <citation type="journal article" date="2004" name="Dev. Cell">
        <title>The Atg1-Atg13 complex regulates Atg9 and Atg23 retrieval transport from the pre-autophagosomal structure.</title>
        <authorList>
            <person name="Reggiori F."/>
            <person name="Tucker K.A."/>
            <person name="Stromhaug P.E."/>
            <person name="Klionsky D.J."/>
        </authorList>
    </citation>
    <scope>SUBCELLULAR LOCATION</scope>
    <scope>INTERACTION WITH ATG18</scope>
    <scope>TRAFFICKING</scope>
</reference>
<reference key="14">
    <citation type="journal article" date="2004" name="J. Biol. Chem.">
        <title>Cargo proteins facilitate the formation of transport vesicles in the cytoplasm to vacuole targeting pathway.</title>
        <authorList>
            <person name="Shintani T."/>
            <person name="Klionsky D.J."/>
        </authorList>
    </citation>
    <scope>SUBCELLULAR LOCATION</scope>
</reference>
<reference key="15">
    <citation type="journal article" date="2005" name="Autophagy">
        <title>Atg9 cycles between mitochondria and the pre-autophagosomal structure in yeasts.</title>
        <authorList>
            <person name="Reggiori F."/>
            <person name="Shintani T."/>
            <person name="Nair U."/>
            <person name="Klionsky D.J."/>
        </authorList>
    </citation>
    <scope>SUBCELLULAR LOCATION</scope>
</reference>
<reference key="16">
    <citation type="journal article" date="2006" name="J. Cell Sci.">
        <title>Atg9 sorting from mitochondria is impaired in early secretion and VFT-complex mutants in Saccharomyces cerevisiae.</title>
        <authorList>
            <person name="Reggiori F."/>
            <person name="Klionsky D.J."/>
        </authorList>
    </citation>
    <scope>SUBCELLULAR LOCATION</scope>
</reference>
<reference key="17">
    <citation type="journal article" date="2006" name="J. Cell Biol.">
        <title>Recruitment of Atg9 to the preautophagosomal structure by Atg11 is essential for selective autophagy in budding yeast.</title>
        <authorList>
            <person name="He C."/>
            <person name="Song H."/>
            <person name="Yorimitsu T."/>
            <person name="Monastyrska I."/>
            <person name="Yen W.-L."/>
            <person name="Legakis J.E."/>
            <person name="Klionsky D.J."/>
        </authorList>
    </citation>
    <scope>INTERACTION WITH ATG11; ATG23 AND ATG27</scope>
    <scope>MUTAGENESIS OF HIS-192</scope>
</reference>
<reference key="18">
    <citation type="journal article" date="2006" name="PLoS Biol.">
        <title>Autophagy counterbalances endoplasmic reticulum expansion during the unfolded protein response.</title>
        <authorList>
            <person name="Bernales S."/>
            <person name="McDonald K.L."/>
            <person name="Walter P."/>
        </authorList>
    </citation>
    <scope>FUNCTION</scope>
</reference>
<reference key="19">
    <citation type="journal article" date="2006" name="Proc. Natl. Acad. Sci. U.S.A.">
        <title>A global topology map of the Saccharomyces cerevisiae membrane proteome.</title>
        <authorList>
            <person name="Kim H."/>
            <person name="Melen K."/>
            <person name="Oesterberg M."/>
            <person name="von Heijne G."/>
        </authorList>
    </citation>
    <scope>TOPOLOGY [LARGE SCALE ANALYSIS]</scope>
    <source>
        <strain>ATCC 208353 / W303-1A</strain>
    </source>
</reference>
<reference key="20">
    <citation type="journal article" date="2007" name="Autophagy">
        <title>Atg9 trafficking in autophagy-related pathways.</title>
        <authorList>
            <person name="He C."/>
            <person name="Klionsky D.J."/>
        </authorList>
    </citation>
    <scope>FUNCTION</scope>
</reference>
<reference key="21">
    <citation type="journal article" date="2007" name="Autophagy">
        <title>A cycling protein complex required for selective autophagy.</title>
        <authorList>
            <person name="Legakis J.E."/>
            <person name="Yen W.L."/>
            <person name="Klionsky D.J."/>
        </authorList>
    </citation>
    <scope>SUBCELLULAR LOCATION</scope>
    <scope>FUNCTION</scope>
</reference>
<reference key="22">
    <citation type="journal article" date="2007" name="Genes Cells">
        <title>Hierarchy of Atg proteins in pre-autophagosomal structure organization.</title>
        <authorList>
            <person name="Suzuki K."/>
            <person name="Kubota Y."/>
            <person name="Sekito T."/>
            <person name="Ohsumi Y."/>
        </authorList>
    </citation>
    <scope>SUBCELLULAR LOCATION</scope>
</reference>
<reference key="23">
    <citation type="journal article" date="2007" name="Mol. Biol. Cell">
        <title>Atg27 is required for autophagy-dependent cycling of Atg9.</title>
        <authorList>
            <person name="Yen W.-L."/>
            <person name="Legakis J.E."/>
            <person name="Nair U."/>
            <person name="Klionsky D.J."/>
        </authorList>
    </citation>
    <scope>SUBCELLULAR LOCATION</scope>
    <scope>TRAFFICKING</scope>
</reference>
<reference key="24">
    <citation type="journal article" date="2007" name="Mol. Biol. Cell">
        <title>Atg19 mediates a dual interaction cargo sorting mechanism in selective autophagy.</title>
        <authorList>
            <person name="Chang C.Y."/>
            <person name="Huang W.P."/>
        </authorList>
    </citation>
    <scope>INTERACTION WITH ATG11</scope>
</reference>
<reference key="25">
    <citation type="journal article" date="2008" name="J. Biol. Chem.">
        <title>Mitophagy in yeast occurs through a selective mechanism.</title>
        <authorList>
            <person name="Kanki T."/>
            <person name="Klionsky D.J."/>
        </authorList>
    </citation>
    <scope>FUNCTION</scope>
</reference>
<reference key="26">
    <citation type="journal article" date="2008" name="Mol. Biol. Cell">
        <title>Arp2 links autophagic machinery with the actin cytoskeleton.</title>
        <authorList>
            <person name="Monastyrska I."/>
            <person name="He C."/>
            <person name="Geng J."/>
            <person name="Hoppe A.D."/>
            <person name="Li Z."/>
            <person name="Klionsky D.J."/>
        </authorList>
    </citation>
    <scope>SUBCELLULAR LOCATION</scope>
    <scope>TRAFFICKING</scope>
</reference>
<reference key="27">
    <citation type="journal article" date="2008" name="J. Cell Biol.">
        <title>Quantitative analysis of autophagy-related protein stoichiometry by fluorescence microscopy.</title>
        <authorList>
            <person name="Geng J."/>
            <person name="Baba M."/>
            <person name="Nair U."/>
            <person name="Klionsky D.J."/>
        </authorList>
    </citation>
    <scope>SUBCELLULAR LOCATION</scope>
</reference>
<reference key="28">
    <citation type="journal article" date="2008" name="Mol. Biol. Cell">
        <title>Self-interaction is critical for Atg9 transport and function at the phagophore assembly site during autophagy.</title>
        <authorList>
            <person name="He C."/>
            <person name="Baba M."/>
            <person name="Cao Y."/>
            <person name="Klionsky D.J."/>
        </authorList>
    </citation>
    <scope>FUNCTION</scope>
</reference>
<reference key="29">
    <citation type="journal article" date="2008" name="Mol. Cell. Proteomics">
        <title>A multidimensional chromatography technology for in-depth phosphoproteome analysis.</title>
        <authorList>
            <person name="Albuquerque C.P."/>
            <person name="Smolka M.B."/>
            <person name="Payne S.H."/>
            <person name="Bafna V."/>
            <person name="Eng J."/>
            <person name="Zhou H."/>
        </authorList>
    </citation>
    <scope>PHOSPHORYLATION [LARGE SCALE ANALYSIS] AT SER-787</scope>
    <scope>IDENTIFICATION BY MASS SPECTROMETRY [LARGE SCALE ANALYSIS]</scope>
</reference>
<reference key="30">
    <citation type="journal article" date="2009" name="Genes Cells">
        <title>Atg17 recruits Atg9 to organize the pre-autophagosomal structure.</title>
        <authorList>
            <person name="Sekito T."/>
            <person name="Kawamata T."/>
            <person name="Ichikawa R."/>
            <person name="Suzuki K."/>
            <person name="Ohsumi Y."/>
        </authorList>
    </citation>
    <scope>INTERACTION WITH ATG11 AND ATG17</scope>
    <scope>SUBCELLULAR LOCATION</scope>
</reference>
<reference key="31">
    <citation type="journal article" date="2009" name="Science">
        <title>Global analysis of Cdk1 substrate phosphorylation sites provides insights into evolution.</title>
        <authorList>
            <person name="Holt L.J."/>
            <person name="Tuch B.B."/>
            <person name="Villen J."/>
            <person name="Johnson A.D."/>
            <person name="Gygi S.P."/>
            <person name="Morgan D.O."/>
        </authorList>
    </citation>
    <scope>PHOSPHORYLATION [LARGE SCALE ANALYSIS] AT SER-143 AND SER-144</scope>
    <scope>IDENTIFICATION BY MASS SPECTROMETRY [LARGE SCALE ANALYSIS]</scope>
</reference>
<reference key="32">
    <citation type="journal article" date="2010" name="J. Cell Biol.">
        <title>The conserved oligomeric Golgi complex is involved in double-membrane vesicle formation during autophagy.</title>
        <authorList>
            <person name="Yen W.L."/>
            <person name="Shintani T."/>
            <person name="Nair U."/>
            <person name="Cao Y."/>
            <person name="Richardson B.C."/>
            <person name="Li Z."/>
            <person name="Hughson F.M."/>
            <person name="Baba M."/>
            <person name="Klionsky D.J."/>
        </authorList>
    </citation>
    <scope>SUBCELLULAR LOCATION</scope>
    <scope>TRAFFICKING</scope>
    <scope>INTERACTION WITH COG3 AND COG4</scope>
</reference>
<reference key="33">
    <citation type="journal article" date="2010" name="J. Cell Biol.">
        <title>An Atg9-containing compartment that functions in the early steps of autophagosome biogenesis.</title>
        <authorList>
            <person name="Mari M."/>
            <person name="Griffith J."/>
            <person name="Rieter E."/>
            <person name="Krishnappa L."/>
            <person name="Klionsky D.J."/>
            <person name="Reggiori F."/>
        </authorList>
    </citation>
    <scope>SUBCELLULAR LOCATION</scope>
    <scope>TRAFFICKING</scope>
</reference>
<reference key="34">
    <citation type="journal article" date="2010" name="Mol. Biol. Cell">
        <title>Post-Golgi Sec proteins are required for autophagy in Saccharomyces cerevisiae.</title>
        <authorList>
            <person name="Geng J."/>
            <person name="Nair U."/>
            <person name="Yasumura-Yorimitsu K."/>
            <person name="Klionsky D.J."/>
        </authorList>
    </citation>
    <scope>SUBCELLULAR LOCATION</scope>
    <scope>TRAFFICKING</scope>
</reference>
<reference key="35">
    <citation type="journal article" date="2010" name="Mol. Biol. Cell">
        <title>Exit from the Golgi is required for the expansion of the autophagosomal phagophore in yeast Saccharomyces cerevisiae.</title>
        <authorList>
            <person name="van der Vaart A."/>
            <person name="Griffith J."/>
            <person name="Reggiori F."/>
        </authorList>
    </citation>
    <scope>SUBCELLULAR LOCATION</scope>
    <scope>TRAFFICKING</scope>
</reference>
<reference key="36">
    <citation type="journal article" date="2010" name="Mol. Biol. Cell">
        <title>Membrane delivery to the yeast autophagosome from the Golgi-endosomal system.</title>
        <authorList>
            <person name="Ohashi Y."/>
            <person name="Munro S."/>
        </authorList>
    </citation>
    <scope>SUBCELLULAR LOCATION</scope>
    <scope>TRAFFICKING</scope>
</reference>
<reference key="37">
    <citation type="journal article" date="2011" name="Cell">
        <title>SNARE proteins are required for macroautophagy.</title>
        <authorList>
            <person name="Nair U."/>
            <person name="Jotwani A."/>
            <person name="Geng J."/>
            <person name="Gammoh N."/>
            <person name="Richerson D."/>
            <person name="Yen W.L."/>
            <person name="Griffith J."/>
            <person name="Nag S."/>
            <person name="Wang K."/>
            <person name="Moss T."/>
            <person name="Baba M."/>
            <person name="McNew J.A."/>
            <person name="Jiang X."/>
            <person name="Reggiori F."/>
            <person name="Melia T.J."/>
            <person name="Klionsky D.J."/>
        </authorList>
    </citation>
    <scope>SUBCELLULAR LOCATION</scope>
    <scope>TRAFFICKING</scope>
</reference>
<reference key="38">
    <citation type="journal article" date="2011" name="J. Cell Biol.">
        <title>Two MAPK-signaling pathways are required for mitophagy in Saccharomyces cerevisiae.</title>
        <authorList>
            <person name="Mao K."/>
            <person name="Wang K."/>
            <person name="Zhao M."/>
            <person name="Xu T."/>
            <person name="Klionsky D.J."/>
        </authorList>
    </citation>
    <scope>SUBCELLULAR LOCATION</scope>
    <scope>TRAFFICKING</scope>
</reference>
<reference key="39">
    <citation type="journal article" date="2011" name="J. Cell Biol.">
        <title>Biogenesis of a novel compartment for autophagosome-mediated unconventional protein secretion.</title>
        <authorList>
            <person name="Bruns C."/>
            <person name="McCaffery J.M."/>
            <person name="Curwin A.J."/>
            <person name="Duran J.M."/>
            <person name="Malhotra V."/>
        </authorList>
    </citation>
    <scope>SUBCELLULAR LOCATION</scope>
    <scope>TRAFFICKING</scope>
</reference>
<reference key="40">
    <citation type="journal article" date="2012" name="J. Biol. Chem.">
        <title>Ksp1 kinase regulates autophagy via the target of rapamycin complex 1 (TORC1) pathway.</title>
        <authorList>
            <person name="Umekawa M."/>
            <person name="Klionsky D.J."/>
        </authorList>
    </citation>
    <scope>SUBCELLULAR LOCATION</scope>
    <scope>TRAFFICKING</scope>
</reference>
<reference key="41">
    <citation type="journal article" date="2012" name="J. Biol. Chem.">
        <title>Phosphatidylinositol 4-kinases are required for autophagic membrane trafficking.</title>
        <authorList>
            <person name="Wang K."/>
            <person name="Yang Z."/>
            <person name="Liu X."/>
            <person name="Mao K."/>
            <person name="Nair U."/>
            <person name="Klionsky D.J."/>
        </authorList>
    </citation>
    <scope>SUBCELLULAR LOCATION</scope>
    <scope>TRAFFICKING</scope>
</reference>
<reference key="42">
    <citation type="journal article" date="2012" name="J. Biol. Chem.">
        <title>Atg9 vesicles recruit vesicle-tethering proteins Trs85 and Ypt1 to the autophagosome formation site.</title>
        <authorList>
            <person name="Kakuta S."/>
            <person name="Yamamoto H."/>
            <person name="Negishi L."/>
            <person name="Kondo-Kakuta C."/>
            <person name="Hayashi N."/>
            <person name="Ohsumi Y."/>
        </authorList>
    </citation>
    <scope>SUBCELLULAR LOCATION</scope>
    <scope>FUNCTION</scope>
    <scope>INTERACTION WITH TRS85</scope>
</reference>
<reference key="43">
    <citation type="journal article" date="2012" name="J. Cell Biol.">
        <title>Atg9 vesicles are an important membrane source during early steps of autophagosome formation.</title>
        <authorList>
            <person name="Yamamoto H."/>
            <person name="Kakuta S."/>
            <person name="Watanabe T.M."/>
            <person name="Kitamura A."/>
            <person name="Sekito T."/>
            <person name="Kondo-Kakuta C."/>
            <person name="Ichikawa R."/>
            <person name="Kinjo M."/>
            <person name="Ohsumi Y."/>
        </authorList>
    </citation>
    <scope>SUBCELLULAR LOCATION</scope>
    <scope>TRAFFICKING</scope>
    <scope>FUNCTION</scope>
</reference>
<reference key="44">
    <citation type="journal article" date="2012" name="Proc. Natl. Acad. Sci. U.S.A.">
        <title>Regulation of selective autophagy onset by a Ypt/Rab GTPase module.</title>
        <authorList>
            <person name="Lipatova Z."/>
            <person name="Belogortseva N."/>
            <person name="Zhang X.Q."/>
            <person name="Kim J."/>
            <person name="Taussig D."/>
            <person name="Segev N."/>
        </authorList>
    </citation>
    <scope>SUBCELLULAR LOCATION</scope>
</reference>
<reference key="45">
    <citation type="journal article" date="2013" name="J. Cell Sci.">
        <title>Fine mapping of autophagy-related proteins during autophagosome formation in Saccharomyces cerevisiae.</title>
        <authorList>
            <person name="Suzuki K."/>
            <person name="Akioka M."/>
            <person name="Kondo-Kakuta C."/>
            <person name="Yamamoto H."/>
            <person name="Ohsumi Y."/>
        </authorList>
    </citation>
    <scope>SUBCELLULAR LOCATION</scope>
</reference>
<reference key="46">
    <citation type="journal article" date="2014" name="Autophagy">
        <title>Atg1 kinase organizes autophagosome formation by phosphorylating Atg9.</title>
        <authorList>
            <person name="Papinski D."/>
            <person name="Kraft C."/>
        </authorList>
    </citation>
    <scope>PHOSPHORYLATION BY ATG1</scope>
    <scope>SUBCELLULAR LOCATION</scope>
    <scope>INTERACTION WITH ATG18</scope>
    <scope>FUNCTION</scope>
</reference>
<reference key="47">
    <citation type="journal article" date="2014" name="Mol. Cell">
        <title>Early steps in autophagy depend on direct phosphorylation of Atg9 by the Atg1 kinase.</title>
        <authorList>
            <person name="Papinski D."/>
            <person name="Schuschnig M."/>
            <person name="Reiter W."/>
            <person name="Wilhelm L."/>
            <person name="Barnes C.A."/>
            <person name="Maiolica A."/>
            <person name="Hansmann I."/>
            <person name="Pfaffenwimmer T."/>
            <person name="Kijanska M."/>
            <person name="Stoffel I."/>
            <person name="Lee S.S."/>
            <person name="Brezovich A."/>
            <person name="Lou J.H."/>
            <person name="Turk B.E."/>
            <person name="Aebersold R."/>
            <person name="Ammerer G."/>
            <person name="Peter M."/>
            <person name="Kraft C."/>
        </authorList>
    </citation>
    <scope>FUNCTION</scope>
    <scope>SUBCELLULAR LOCATION</scope>
    <scope>INTERACTION WITH ATG18</scope>
    <scope>PHOSPHORYLATION AT SER-19; SER-657; SER-802; THR-804; SER-831; SER-842; SER-948 AND SER-969</scope>
    <scope>MUTAGENESIS OF SER-19; SER-657; SER-802; THR-804; SER-831; SER-842; SER-948 AND SER-969</scope>
</reference>
<reference key="48">
    <citation type="journal article" date="2015" name="Autophagy">
        <title>Atg41/Icy2 regulates autophagosome formation.</title>
        <authorList>
            <person name="Yao Z."/>
            <person name="Delorme-Axford E."/>
            <person name="Backues S.K."/>
            <person name="Klionsky D.J."/>
        </authorList>
    </citation>
    <scope>SUBCELLULAR LOCATION</scope>
    <scope>INTERACTION WITH ATG41</scope>
</reference>
<reference key="49">
    <citation type="journal article" date="2016" name="Autophagy">
        <title>Phosphorylation of Atg9 regulates movement to the phagophore assembly site and the rate of autophagosome formation.</title>
        <authorList>
            <person name="Feng Y."/>
            <person name="Backues S.K."/>
            <person name="Baba M."/>
            <person name="Heo J.M."/>
            <person name="Harper J.W."/>
            <person name="Klionsky D.J."/>
        </authorList>
    </citation>
    <scope>FUNCTION</scope>
    <scope>INDUCTION BY ATG23 AND ATG27</scope>
    <scope>PHOSPHORYLATION AT SER-122; SER-864; SER-792 AND THR-794</scope>
    <scope>MUTAGENESIS OF SER-122</scope>
</reference>
<reference key="50">
    <citation type="journal article" date="2019" name="PLoS Biol.">
        <title>Atg11 tethers Atg9 vesicles to initiate selective autophagy.</title>
        <authorList>
            <person name="Matscheko N."/>
            <person name="Mayrhofer P."/>
            <person name="Rao Y."/>
            <person name="Beier V."/>
            <person name="Wollert T."/>
        </authorList>
    </citation>
    <scope>INTERACTION WITH ATG11</scope>
</reference>
<reference key="51">
    <citation type="journal article" date="2020" name="Nat. Struct. Mol. Biol.">
        <title>Atg9 is a lipid scramblase that mediates autophagosomal membrane expansion.</title>
        <authorList>
            <person name="Matoba K."/>
            <person name="Kotani T."/>
            <person name="Tsutsumi A."/>
            <person name="Tsuji T."/>
            <person name="Mori T."/>
            <person name="Noshiro D."/>
            <person name="Sugita Y."/>
            <person name="Nomura N."/>
            <person name="Iwata S."/>
            <person name="Ohsumi Y."/>
            <person name="Fujimoto T."/>
            <person name="Nakatogawa H."/>
            <person name="Kikkawa M."/>
            <person name="Noda N.N."/>
        </authorList>
    </citation>
    <scope>FUNCTION</scope>
    <scope>CATALYTIC ACTIVITY</scope>
    <scope>MUTAGENESIS OF 325-GLU--ASN-329; PHE-385; LYS-389; GLN-392; 497-TRP--LEU-501; LEU-545; ARG-560; GLN-576; 640-THR--GLU-645; 661-TYR--SER-670; 678-GLN--PHE-683; ARG-723 AND 761-GLU--PHE-775</scope>
</reference>
<reference key="52">
    <citation type="journal article" date="2020" name="Science">
        <title>Reconstitution of autophagosome nucleation defines Atg9 vesicles as seeds for membrane formation.</title>
        <authorList>
            <person name="Sawa-Makarska J."/>
            <person name="Baumann V."/>
            <person name="Coudevylle N."/>
            <person name="von Buelow S."/>
            <person name="Nogellova V."/>
            <person name="Abert C."/>
            <person name="Schuschnig M."/>
            <person name="Graef M."/>
            <person name="Hummer G."/>
            <person name="Martens S."/>
        </authorList>
    </citation>
    <scope>FUNCTION</scope>
</reference>
<reference key="53">
    <citation type="journal article" date="2021" name="J. Cell Biol.">
        <title>Transmembrane phospholipid translocation mediated by Atg9 is involved in autophagosome formation.</title>
        <authorList>
            <person name="Orii M."/>
            <person name="Tsuji T."/>
            <person name="Ogasawara Y."/>
            <person name="Fujimoto T."/>
        </authorList>
    </citation>
    <scope>FUNCTION</scope>
    <scope>CATALYTIC ACTIVITY</scope>
</reference>
<reference key="54">
    <citation type="journal article" date="2021" name="Proc. Natl. Acad. Sci. U.S.A.">
        <title>Downregulation of autophagy by Met30-mediated Atg9 ubiquitination.</title>
        <authorList>
            <person name="Feng Y."/>
            <person name="Ariosa A.R."/>
            <person name="Yang Y."/>
            <person name="Hu Z."/>
            <person name="Dengjel J."/>
            <person name="Klionsky D.J."/>
        </authorList>
    </citation>
    <scope>UBIQUITINATION AT LYS-113; LYS-121; LYS-138 AND LYS-701</scope>
    <scope>PHOSPHORYLATION AT SER-122</scope>
    <scope>SUBCELLULAR LOCATION</scope>
    <scope>MUTAGENESIS OF LYS-113; LYS-121; SER-122; LYS-138 AND LYS-701</scope>
</reference>
<evidence type="ECO:0000250" key="1">
    <source>
        <dbReference type="UniProtKB" id="O74312"/>
    </source>
</evidence>
<evidence type="ECO:0000255" key="2"/>
<evidence type="ECO:0000256" key="3">
    <source>
        <dbReference type="SAM" id="MobiDB-lite"/>
    </source>
</evidence>
<evidence type="ECO:0000269" key="4">
    <source>
    </source>
</evidence>
<evidence type="ECO:0000269" key="5">
    <source>
    </source>
</evidence>
<evidence type="ECO:0000269" key="6">
    <source>
    </source>
</evidence>
<evidence type="ECO:0000269" key="7">
    <source>
    </source>
</evidence>
<evidence type="ECO:0000269" key="8">
    <source>
    </source>
</evidence>
<evidence type="ECO:0000269" key="9">
    <source>
    </source>
</evidence>
<evidence type="ECO:0000269" key="10">
    <source>
    </source>
</evidence>
<evidence type="ECO:0000269" key="11">
    <source>
    </source>
</evidence>
<evidence type="ECO:0000269" key="12">
    <source>
    </source>
</evidence>
<evidence type="ECO:0000269" key="13">
    <source>
    </source>
</evidence>
<evidence type="ECO:0000269" key="14">
    <source>
    </source>
</evidence>
<evidence type="ECO:0000269" key="15">
    <source>
    </source>
</evidence>
<evidence type="ECO:0000269" key="16">
    <source>
    </source>
</evidence>
<evidence type="ECO:0000269" key="17">
    <source>
    </source>
</evidence>
<evidence type="ECO:0000269" key="18">
    <source>
    </source>
</evidence>
<evidence type="ECO:0000269" key="19">
    <source>
    </source>
</evidence>
<evidence type="ECO:0000269" key="20">
    <source>
    </source>
</evidence>
<evidence type="ECO:0000269" key="21">
    <source>
    </source>
</evidence>
<evidence type="ECO:0000269" key="22">
    <source>
    </source>
</evidence>
<evidence type="ECO:0000269" key="23">
    <source>
    </source>
</evidence>
<evidence type="ECO:0000269" key="24">
    <source>
    </source>
</evidence>
<evidence type="ECO:0000269" key="25">
    <source>
    </source>
</evidence>
<evidence type="ECO:0000269" key="26">
    <source>
    </source>
</evidence>
<evidence type="ECO:0000269" key="27">
    <source>
    </source>
</evidence>
<evidence type="ECO:0000269" key="28">
    <source>
    </source>
</evidence>
<evidence type="ECO:0000269" key="29">
    <source>
    </source>
</evidence>
<evidence type="ECO:0000269" key="30">
    <source>
    </source>
</evidence>
<evidence type="ECO:0000269" key="31">
    <source>
    </source>
</evidence>
<evidence type="ECO:0000269" key="32">
    <source>
    </source>
</evidence>
<evidence type="ECO:0000269" key="33">
    <source>
    </source>
</evidence>
<evidence type="ECO:0000269" key="34">
    <source>
    </source>
</evidence>
<evidence type="ECO:0000269" key="35">
    <source>
    </source>
</evidence>
<evidence type="ECO:0000269" key="36">
    <source>
    </source>
</evidence>
<evidence type="ECO:0000269" key="37">
    <source>
    </source>
</evidence>
<evidence type="ECO:0000269" key="38">
    <source>
    </source>
</evidence>
<evidence type="ECO:0000269" key="39">
    <source>
    </source>
</evidence>
<evidence type="ECO:0000269" key="40">
    <source>
    </source>
</evidence>
<evidence type="ECO:0000269" key="41">
    <source>
    </source>
</evidence>
<evidence type="ECO:0000269" key="42">
    <source>
    </source>
</evidence>
<evidence type="ECO:0000269" key="43">
    <source>
    </source>
</evidence>
<evidence type="ECO:0000269" key="44">
    <source>
    </source>
</evidence>
<evidence type="ECO:0000269" key="45">
    <source>
    </source>
</evidence>
<evidence type="ECO:0000269" key="46">
    <source>
    </source>
</evidence>
<evidence type="ECO:0000269" key="47">
    <source>
    </source>
</evidence>
<evidence type="ECO:0000269" key="48">
    <source>
    </source>
</evidence>
<evidence type="ECO:0000269" key="49">
    <source>
    </source>
</evidence>
<evidence type="ECO:0000269" key="50">
    <source>
    </source>
</evidence>
<evidence type="ECO:0000269" key="51">
    <source>
    </source>
</evidence>
<evidence type="ECO:0000303" key="52">
    <source>
    </source>
</evidence>
<evidence type="ECO:0000303" key="53">
    <source>
    </source>
</evidence>
<evidence type="ECO:0000303" key="54">
    <source>
    </source>
</evidence>
<evidence type="ECO:0000303" key="55">
    <source>
    </source>
</evidence>
<evidence type="ECO:0000303" key="56">
    <source>
    </source>
</evidence>
<evidence type="ECO:0000305" key="57"/>
<evidence type="ECO:0000305" key="58">
    <source>
    </source>
</evidence>
<evidence type="ECO:0000305" key="59">
    <source>
    </source>
</evidence>
<evidence type="ECO:0000312" key="60">
    <source>
        <dbReference type="SGD" id="S000002308"/>
    </source>
</evidence>
<evidence type="ECO:0007744" key="61">
    <source>
    </source>
</evidence>
<evidence type="ECO:0007744" key="62">
    <source>
    </source>
</evidence>
<feature type="chain" id="PRO_0000119839" description="Autophagy-related protein 9">
    <location>
        <begin position="1"/>
        <end position="997"/>
    </location>
</feature>
<feature type="topological domain" description="Cytoplasmic" evidence="59">
    <location>
        <begin position="1"/>
        <end position="318"/>
    </location>
</feature>
<feature type="transmembrane region" description="Helical" evidence="2">
    <location>
        <begin position="319"/>
        <end position="339"/>
    </location>
</feature>
<feature type="topological domain" description="Lumenal" evidence="57">
    <location>
        <begin position="340"/>
        <end position="376"/>
    </location>
</feature>
<feature type="transmembrane region" description="Helical" evidence="2">
    <location>
        <begin position="377"/>
        <end position="397"/>
    </location>
</feature>
<feature type="topological domain" description="Cytoplasmic" evidence="57">
    <location>
        <begin position="398"/>
        <end position="538"/>
    </location>
</feature>
<feature type="intramembrane region" evidence="1">
    <location>
        <begin position="539"/>
        <end position="559"/>
    </location>
</feature>
<feature type="topological domain" description="Cytoplasmic" evidence="57">
    <location>
        <begin position="560"/>
        <end position="620"/>
    </location>
</feature>
<feature type="transmembrane region" description="Helical" evidence="2">
    <location>
        <begin position="621"/>
        <end position="641"/>
    </location>
</feature>
<feature type="topological domain" description="Lumenal" evidence="57">
    <location>
        <begin position="642"/>
        <end position="656"/>
    </location>
</feature>
<feature type="transmembrane region" description="Helical" evidence="2">
    <location>
        <begin position="657"/>
        <end position="677"/>
    </location>
</feature>
<feature type="topological domain" description="Cytoplasmic" evidence="57">
    <location>
        <begin position="678"/>
        <end position="723"/>
    </location>
</feature>
<feature type="intramembrane region" evidence="1">
    <location>
        <begin position="724"/>
        <end position="744"/>
    </location>
</feature>
<feature type="topological domain" description="Cytoplasmic" evidence="59">
    <location>
        <begin position="745"/>
        <end position="997"/>
    </location>
</feature>
<feature type="region of interest" description="Disordered" evidence="3">
    <location>
        <begin position="29"/>
        <end position="88"/>
    </location>
</feature>
<feature type="region of interest" description="Disordered" evidence="3">
    <location>
        <begin position="128"/>
        <end position="159"/>
    </location>
</feature>
<feature type="region of interest" description="Disordered" evidence="3">
    <location>
        <begin position="213"/>
        <end position="235"/>
    </location>
</feature>
<feature type="compositionally biased region" description="Polar residues" evidence="3">
    <location>
        <begin position="29"/>
        <end position="39"/>
    </location>
</feature>
<feature type="compositionally biased region" description="Acidic residues" evidence="3">
    <location>
        <begin position="79"/>
        <end position="88"/>
    </location>
</feature>
<feature type="compositionally biased region" description="Acidic residues" evidence="3">
    <location>
        <begin position="144"/>
        <end position="159"/>
    </location>
</feature>
<feature type="compositionally biased region" description="Polar residues" evidence="3">
    <location>
        <begin position="221"/>
        <end position="233"/>
    </location>
</feature>
<feature type="modified residue" description="Phosphoserine; by ATG1" evidence="40">
    <location>
        <position position="19"/>
    </location>
</feature>
<feature type="modified residue" description="Phosphoserine" evidence="43 48">
    <location>
        <position position="122"/>
    </location>
</feature>
<feature type="modified residue" description="Phosphoserine" evidence="62">
    <location>
        <position position="143"/>
    </location>
</feature>
<feature type="modified residue" description="Phosphoserine" evidence="62">
    <location>
        <position position="144"/>
    </location>
</feature>
<feature type="modified residue" description="Phosphoserine; by ATG1" evidence="40">
    <location>
        <position position="657"/>
    </location>
</feature>
<feature type="modified residue" description="Phosphoserine" evidence="61">
    <location>
        <position position="787"/>
    </location>
</feature>
<feature type="modified residue" description="Phosphoserine" evidence="43">
    <location>
        <position position="792"/>
    </location>
</feature>
<feature type="modified residue" description="Phosphothreonine" evidence="43">
    <location>
        <position position="794"/>
    </location>
</feature>
<feature type="modified residue" description="Phosphoserine; by ATG1" evidence="40">
    <location>
        <position position="802"/>
    </location>
</feature>
<feature type="modified residue" description="Phosphothreonine; by ATG1" evidence="40">
    <location>
        <position position="804"/>
    </location>
</feature>
<feature type="modified residue" description="Phosphoserine; by ATG1" evidence="40">
    <location>
        <position position="831"/>
    </location>
</feature>
<feature type="modified residue" description="Phosphoserine; by ATG1" evidence="40">
    <location>
        <position position="842"/>
    </location>
</feature>
<feature type="modified residue" description="Phosphoserine" evidence="43">
    <location>
        <position position="864"/>
    </location>
</feature>
<feature type="modified residue" description="Phosphoserine; by ATG1" evidence="40">
    <location>
        <position position="948"/>
    </location>
</feature>
<feature type="modified residue" description="Phosphoserine; by ATG1" evidence="40">
    <location>
        <position position="969"/>
    </location>
</feature>
<feature type="cross-link" description="Glycyl lysine isopeptide (Lys-Gly) (interchain with G-Cter in ubiquitin)" evidence="48">
    <location>
        <position position="113"/>
    </location>
</feature>
<feature type="cross-link" description="Glycyl lysine isopeptide (Lys-Gly) (interchain with G-Cter in ubiquitin)" evidence="48">
    <location>
        <position position="121"/>
    </location>
</feature>
<feature type="cross-link" description="Glycyl lysine isopeptide (Lys-Gly) (interchain with G-Cter in ubiquitin)" evidence="48">
    <location>
        <position position="138"/>
    </location>
</feature>
<feature type="cross-link" description="Glycyl lysine isopeptide (Lys-Gly) (interchain with G-Cter in ubiquitin)" evidence="48">
    <location>
        <position position="701"/>
    </location>
</feature>
<feature type="mutagenesis site" description="Abolished autophagy and cytoplasm to vacuole transport (Cvt) vesicle formation; when associated with A-657, A-802, A-804, A-831, A-842, A-948 and A-969." evidence="40">
    <original>S</original>
    <variation>A</variation>
    <location>
        <position position="19"/>
    </location>
</feature>
<feature type="mutagenesis site" description="Abolished ubiquitination by the SCF(MET30) complex and subsequent degradation; when associated with R-121 and R-138." evidence="48">
    <original>K</original>
    <variation>R</variation>
    <location>
        <position position="113"/>
    </location>
</feature>
<feature type="mutagenesis site" description="Abolished ubiquitination by the SCF(MET30) complex and subsequent degradation; when associated with R-113 and R-138." evidence="48">
    <original>K</original>
    <variation>R</variation>
    <location>
        <position position="121"/>
    </location>
</feature>
<feature type="mutagenesis site" description="Impaired selective autophagy. Does not affect ubiquitination by the SCF(MET30) complex." evidence="43 48">
    <original>S</original>
    <variation>A</variation>
    <location>
        <position position="122"/>
    </location>
</feature>
<feature type="mutagenesis site" description="Phospho-mimetic mutant; increased selective autophagy. Prevents ubiquitination by the SCF(MET30) complex." evidence="43 48">
    <original>S</original>
    <variation>D</variation>
    <location>
        <position position="122"/>
    </location>
</feature>
<feature type="mutagenesis site" description="Abolished ubiquitination by the SCF(MET30) complex and subsequent degradation; when associated with R-113 and R-121." evidence="48">
    <original>K</original>
    <variation>R</variation>
    <location>
        <position position="138"/>
    </location>
</feature>
<feature type="mutagenesis site" description="Abolishes interaction with ATG11 and disrupts Cvt, but not bulk autophagy." evidence="16">
    <original>H</original>
    <variation>L</variation>
    <location>
        <position position="192"/>
    </location>
</feature>
<feature type="mutagenesis site" description="In Middle mutant; impaired autophagy." evidence="46">
    <original>EKILN</original>
    <variation>AAILA</variation>
    <location>
        <begin position="325"/>
        <end position="329"/>
    </location>
</feature>
<feature type="mutagenesis site" description="In Entrance 1 mutant; does not affect autophagy; when associated with S-545." evidence="46">
    <original>F</original>
    <variation>A</variation>
    <location>
        <position position="385"/>
    </location>
</feature>
<feature type="mutagenesis site" description="In Entrance 2 mutant; does not affect autophagy." evidence="46">
    <original>K</original>
    <variation>A</variation>
    <location>
        <position position="389"/>
    </location>
</feature>
<feature type="mutagenesis site" description="In Entrance 3 mutant; impaired autophagy possibly caused by mislocalization; when associated with 497-A--A-501." evidence="46">
    <original>Q</original>
    <variation>A</variation>
    <location>
        <position position="392"/>
    </location>
</feature>
<feature type="mutagenesis site" description="In Entrance 3 mutant; impaired autophagy possibly caused by mislocalization; when associated with A-392." evidence="46">
    <original>WNINL</original>
    <variation>ANINA</variation>
    <location>
        <begin position="497"/>
        <end position="501"/>
    </location>
</feature>
<feature type="mutagenesis site" description="In Entrance 1 mutant; does not affect autophagy; when associated with A-385." evidence="46">
    <original>L</original>
    <variation>S</variation>
    <location>
        <position position="545"/>
    </location>
</feature>
<feature type="mutagenesis site" description="In Basic mutant; impaired autophagy; when associated with A-576 and A-723." evidence="46">
    <original>R</original>
    <variation>A</variation>
    <location>
        <position position="560"/>
    </location>
</feature>
<feature type="mutagenesis site" description="In Basic mutant; impaired autophagy; when associated with A-560 and A-723." evidence="46">
    <original>Q</original>
    <variation>A</variation>
    <location>
        <position position="576"/>
    </location>
</feature>
<feature type="mutagenesis site" description="In Acidic mutant; abolished autophagy caused by defects in phospholipid scramblase activity." evidence="46">
    <original>TVFDPE</original>
    <variation>AVFAAA</variation>
    <location>
        <begin position="640"/>
        <end position="645"/>
    </location>
</feature>
<feature type="mutagenesis site" description="Abolished autophagy and cytoplasm to vacuole transport (Cvt) vesicle formation; when associated with A-19, A-802, A-804, A-831, A-842, A-948 and A-969." evidence="40">
    <original>S</original>
    <variation>A</variation>
    <location>
        <position position="657"/>
    </location>
</feature>
<feature type="mutagenesis site" description="In Wall mutant; abolished autophagy caused by defects in phospholipid scramblase activity." evidence="46">
    <original>YITILGAIWS</original>
    <variation>AIAILAAIWA</variation>
    <location>
        <begin position="661"/>
        <end position="670"/>
    </location>
</feature>
<feature type="mutagenesis site" description="In Junction mutant; does not affect autophagy." evidence="46">
    <original>QEYHVF</original>
    <variation>AAHVA</variation>
    <location>
        <begin position="678"/>
        <end position="683"/>
    </location>
</feature>
<feature type="mutagenesis site" description="Does not affect ubiquitination by the SCF(MET30) complex and subsequent degradation." evidence="48">
    <original>K</original>
    <variation>R</variation>
    <location>
        <position position="701"/>
    </location>
</feature>
<feature type="mutagenesis site" description="In Basic mutant; impaired autophagy; when associated with A-560 and A-576." evidence="46">
    <original>R</original>
    <variation>A</variation>
    <location>
        <position position="723"/>
    </location>
</feature>
<feature type="mutagenesis site" description="In Hexamer mutant; does not affect autophagy." evidence="46">
    <original>EYVDGLGYVCKYAMF</original>
    <variation>AAVDGLGYVCKYAAA</variation>
    <location>
        <begin position="761"/>
        <end position="775"/>
    </location>
</feature>
<feature type="mutagenesis site" description="Abolished autophagy and cytoplasm to vacuole transport (Cvt) vesicle formation; when associated with A-19, A-657, A-804, A-831, A-842, A-948 and A-969." evidence="40">
    <original>S</original>
    <variation>A</variation>
    <location>
        <position position="802"/>
    </location>
</feature>
<feature type="mutagenesis site" description="Abolished autophagy and cytoplasm to vacuole transport (Cvt) vesicle formation; when associated with A-19, A-657, A-802, A-831, A-842, A-948 and A-969." evidence="40">
    <original>T</original>
    <variation>A</variation>
    <location>
        <position position="804"/>
    </location>
</feature>
<feature type="mutagenesis site" description="Abolished autophagy and cytoplasm to vacuole transport (Cvt) vesicle formation; when associated with A-19, A-657, A-802, A-804, A-842, A-948 and A-969." evidence="40">
    <original>S</original>
    <variation>A</variation>
    <location>
        <position position="831"/>
    </location>
</feature>
<feature type="mutagenesis site" description="Abolished autophagy and cytoplasm to vacuole transport (Cvt) vesicle formation; when associated with A-19, A-657, A-802, A-804, A-831, A-948 and A-969." evidence="40">
    <original>S</original>
    <variation>A</variation>
    <location>
        <position position="842"/>
    </location>
</feature>
<feature type="mutagenesis site" description="Abolished autophagy and cytoplasm to vacuole transport (Cvt) vesicle formation; when associated with A-19, A-657, A-802, A-804, A-831, A-842 and A-969." evidence="40">
    <original>S</original>
    <variation>A</variation>
    <location>
        <position position="948"/>
    </location>
</feature>
<feature type="mutagenesis site" description="Abolished autophagy and cytoplasm to vacuole transport (Cvt) vesicle formation; when associated with A-19, A-657, A-802, A-804, A-831 and A-842." evidence="40">
    <original>S</original>
    <variation>A</variation>
    <location>
        <position position="969"/>
    </location>
</feature>
<comment type="function">
    <text evidence="4 5 7 8 14 19 20 23 24 36 38 40 41 43 45 46 47 49 50 51">Phospholipid scramblase involved in autophagy and cytoplasm to vacuole transport (Cvt) vesicle formation (PubMed:10735854, PubMed:14504273, PubMed:24440502, PubMed:27050455, PubMed:33106658, PubMed:33439214, PubMed:7593182, PubMed:8224160, PubMed:8663607). Cycles between the preautophagosomal structure/phagophore assembly site (PAS) and the cytoplasmic vesicle pool and supplies membrane for the growing autophagosome (PubMed:10662773, PubMed:11689437, PubMed:17329962, PubMed:17426440, PubMed:18829864, PubMed:22826123, PubMed:24905091, PubMed:33439214). Lipid scramblase activity plays a key role in preautophagosomal structure/phagophore assembly by distributing the phospholipids that arrive through ATG2 from the cytoplasmic to the luminal leaflet of the bilayer, thereby driving autophagosomal membrane expansion (PubMed:32883836, PubMed:33106658, PubMed:33439214). Required for mitophagy (PubMed:18818209). Also involved in endoplasmic reticulum-specific autophagic process and is essential for the survival of cells subjected to severe ER stress (PubMed:17132049). Recruits vesicle-tethering proteins TRS85 and YPT1 to the autophagosome formation site (PubMed:23129774). Also recruits ATG23 and ATG8 to the PAS (PubMed:14504273).</text>
</comment>
<comment type="catalytic activity">
    <reaction evidence="46 47">
        <text>a 1,2-diacyl-sn-glycero-3-phosphocholine(in) = a 1,2-diacyl-sn-glycero-3-phosphocholine(out)</text>
        <dbReference type="Rhea" id="RHEA:38571"/>
        <dbReference type="ChEBI" id="CHEBI:57643"/>
    </reaction>
</comment>
<comment type="catalytic activity">
    <reaction evidence="46 47">
        <text>a 1,2-diacyl-sn-glycero-3-phospho-L-serine(in) = a 1,2-diacyl-sn-glycero-3-phospho-L-serine(out)</text>
        <dbReference type="Rhea" id="RHEA:38663"/>
        <dbReference type="ChEBI" id="CHEBI:57262"/>
    </reaction>
</comment>
<comment type="catalytic activity">
    <reaction evidence="46">
        <text>a 1,2-diacyl-sn-glycero-3-phosphoethanolamine(in) = a 1,2-diacyl-sn-glycero-3-phosphoethanolamine(out)</text>
        <dbReference type="Rhea" id="RHEA:38895"/>
        <dbReference type="ChEBI" id="CHEBI:64612"/>
    </reaction>
</comment>
<comment type="catalytic activity">
    <reaction evidence="46">
        <text>a 1,2-diacyl-sn-glycero-3-phospho-(1D-myo-inositol-3-phosphate)(in) = a 1,2-diacyl-sn-glycero-3-phospho-(1D-myo-inositol-3-phosphate)(out)</text>
        <dbReference type="Rhea" id="RHEA:67920"/>
        <dbReference type="ChEBI" id="CHEBI:58088"/>
    </reaction>
</comment>
<comment type="subunit">
    <text evidence="6 8 9 16 17 24 25 26 38 40 41 42 43 44 46">Homotrimer; forms a homotrimer with a central pore that forms a path between the two membrane leaflets (PubMed:33106658). Interacts with ATG23 and ATG27 to form a cycling complex for trafficking to the PAS (PubMed:14504273, PubMed:17178909, PubMed:27050455). Interacts (via N-terminus) with ATG11, required for recruitment of ATG9 to the PAS for the Cvt pathway during nutrient-rich conditions (PubMed:17178909, PubMed:17192412, PubMed:19371383, PubMed:31356628). Interacts (via N-terminus) with ATG17; required for recruitment to the PAS during autophagy and starved conditions (PubMed:19371383). Interacts with ATG2 and ATG18; required for the retrieval of ATG9 from the PAS to the cytoplasmic pool (PubMed:11382760, PubMed:14723849, PubMed:24440502, PubMed:24905091). Interacts with ATG41 (PubMed:26565778). Interacts with the conserved oligomeric Golgi (COG) complex subunits COG3 and COG4 (PubMed:20065092). Interacts with TRS85 (PubMed:23129774).</text>
</comment>
<comment type="subcellular location">
    <subcellularLocation>
        <location evidence="9 10 13 15 18 20 22 25 26 34 38 40 41 48 58">Preautophagosomal structure membrane</location>
        <topology evidence="12">Multi-pass membrane protein</topology>
    </subcellularLocation>
    <subcellularLocation>
        <location evidence="5 9">Cytoplasmic vesicle membrane</location>
        <topology evidence="12">Multi-pass membrane protein</topology>
    </subcellularLocation>
    <subcellularLocation>
        <location evidence="15">Golgi apparatus membrane</location>
        <topology evidence="12">Multi-pass membrane protein</topology>
    </subcellularLocation>
    <subcellularLocation>
        <location>Endoplasmic reticulum membrane</location>
        <topology evidence="12">Multi-pass membrane protein</topology>
    </subcellularLocation>
    <subcellularLocation>
        <location evidence="11 13 15">Mitochondrion membrane</location>
        <topology evidence="12">Multi-pass membrane protein</topology>
    </subcellularLocation>
    <text evidence="21 27 28 29 30 31 32 33 35 36 37 39 42">The vast majority of ATG9 exists on cytoplasmic mobile vesicles (designated ATG9 vesicles) that were derived from the Golgi apparatus in a process involving ATG23 and ATG27 (PubMed:22509044, PubMed:22826123). The peripheral pool of ATG9 partially colocalizes within tubulovesicular clusters adjacent to mitochondria (PubMed:20855505, PubMed:26565778). It appears that membrane that contains ATG9 is delivered to the autophagosome from the Golgi-endosomal system rather than from the ER or mitochondria (PubMed:20444982, PubMed:20861302). Within the PAS, localizes at the edge of the isolation membrane (PubMed:22144692, PubMed:23549786). ATG9 cycling is regulated by at least the conserved oligomeric Golgi (COG) complex, ARP2, HOG1, PIK1, SEC2, SEC9, SSO1 and SSO2 (PubMed:18287533, PubMed:20444978, PubMed:21576396, PubMed:21784249, PubMed:22977244).</text>
</comment>
<comment type="domain">
    <text evidence="1">Forms a homotrimer with a solvated central pore, which is connected laterally to the cytosol through the cavity within each protomer (By similarity). Acts as a lipid scramblase that uses its central pore to function: the central pore opens laterally to accommodate lipid headgroups, thereby enabling lipid flipping and redistribution of lipids added to the outer leaflet of ATG9-containing vesicles, thereby enabling growth into autophagosomes (By similarity).</text>
</comment>
<comment type="PTM">
    <text evidence="40 41 43 48">Phosphorylated by ATG1; phosphorylation is required for autophagy and cytoplasm to vacuole transport (Cvt) vesicle formation (PubMed:24440502). Phosphorylation by ATG1 regulates ATG18 interaction and preautophagosome elongation (PubMed:24905091). Phosphorylation at Ser-122 is required for selective autophagy by regulating anterograde trafficking and interaction with ATG23 and ATG27 (PubMed:27050455, PubMed:33443148). Phosphorylation at Ser-122 prevents ubiquitination by the SCF(MET30) complex (PubMed:33443148).</text>
</comment>
<comment type="PTM">
    <text evidence="48">Ubiquitinated by the SCF(MET30) complex in normal conditions, leading to its degradation by the proteasome, thereby preventing inappropriate induction of autophagy (PubMed:33443148). Ubiquitination by the SCF(MET30) complex is prevented by phosphorylation at Ser-122 (PubMed:33443148).</text>
</comment>
<comment type="similarity">
    <text evidence="57">Belongs to the ATG9 family.</text>
</comment>
<gene>
    <name evidence="52" type="primary">ATG9</name>
    <name evidence="54" type="synonym">APG9</name>
    <name evidence="55" type="synonym">AUT9</name>
    <name evidence="53" type="synonym">CVT7</name>
    <name evidence="60" type="ordered locus">YDL149W</name>
    <name evidence="56" type="ORF">D1560</name>
</gene>
<keyword id="KW-0072">Autophagy</keyword>
<keyword id="KW-0968">Cytoplasmic vesicle</keyword>
<keyword id="KW-0256">Endoplasmic reticulum</keyword>
<keyword id="KW-0333">Golgi apparatus</keyword>
<keyword id="KW-1017">Isopeptide bond</keyword>
<keyword id="KW-0445">Lipid transport</keyword>
<keyword id="KW-0472">Membrane</keyword>
<keyword id="KW-0496">Mitochondrion</keyword>
<keyword id="KW-0597">Phosphoprotein</keyword>
<keyword id="KW-1185">Reference proteome</keyword>
<keyword id="KW-0812">Transmembrane</keyword>
<keyword id="KW-1133">Transmembrane helix</keyword>
<keyword id="KW-0813">Transport</keyword>
<keyword id="KW-0832">Ubl conjugation</keyword>
<accession>Q12142</accession>
<accession>D6VRJ9</accession>
<dbReference type="EMBL" id="X97751">
    <property type="protein sequence ID" value="CAA66342.1"/>
    <property type="molecule type" value="Genomic_DNA"/>
</dbReference>
<dbReference type="EMBL" id="Z74197">
    <property type="protein sequence ID" value="CAA98723.1"/>
    <property type="molecule type" value="Genomic_DNA"/>
</dbReference>
<dbReference type="EMBL" id="BK006938">
    <property type="protein sequence ID" value="DAA11709.1"/>
    <property type="molecule type" value="Genomic_DNA"/>
</dbReference>
<dbReference type="PIR" id="S67697">
    <property type="entry name" value="S67697"/>
</dbReference>
<dbReference type="RefSeq" id="NP_010132.1">
    <property type="nucleotide sequence ID" value="NM_001180209.1"/>
</dbReference>
<dbReference type="SMR" id="Q12142"/>
<dbReference type="BioGRID" id="31912">
    <property type="interactions" value="587"/>
</dbReference>
<dbReference type="DIP" id="DIP-1938N"/>
<dbReference type="FunCoup" id="Q12142">
    <property type="interactions" value="315"/>
</dbReference>
<dbReference type="IntAct" id="Q12142">
    <property type="interactions" value="13"/>
</dbReference>
<dbReference type="MINT" id="Q12142"/>
<dbReference type="STRING" id="4932.YDL149W"/>
<dbReference type="TCDB" id="9.A.15.1.1">
    <property type="family name" value="the autophagy-related phagophore-formation transporter (apt) family"/>
</dbReference>
<dbReference type="TCDB" id="9.A.79.1.1">
    <property type="family name" value="the autophagosomal phospholipid transmembrane translocase (atg9) family"/>
</dbReference>
<dbReference type="iPTMnet" id="Q12142"/>
<dbReference type="PaxDb" id="4932-YDL149W"/>
<dbReference type="PeptideAtlas" id="Q12142"/>
<dbReference type="EnsemblFungi" id="YDL149W_mRNA">
    <property type="protein sequence ID" value="YDL149W"/>
    <property type="gene ID" value="YDL149W"/>
</dbReference>
<dbReference type="GeneID" id="851406"/>
<dbReference type="KEGG" id="sce:YDL149W"/>
<dbReference type="AGR" id="SGD:S000002308"/>
<dbReference type="SGD" id="S000002308">
    <property type="gene designation" value="ATG9"/>
</dbReference>
<dbReference type="VEuPathDB" id="FungiDB:YDL149W"/>
<dbReference type="eggNOG" id="KOG2173">
    <property type="taxonomic scope" value="Eukaryota"/>
</dbReference>
<dbReference type="GeneTree" id="ENSGT00390000014839"/>
<dbReference type="HOGENOM" id="CLU_006200_1_0_1"/>
<dbReference type="InParanoid" id="Q12142"/>
<dbReference type="OMA" id="IAEWKFR"/>
<dbReference type="OrthoDB" id="2020634at2759"/>
<dbReference type="BioCyc" id="YEAST:G3O-29546-MONOMER"/>
<dbReference type="Reactome" id="R-SCE-1632852">
    <property type="pathway name" value="Macroautophagy"/>
</dbReference>
<dbReference type="BioGRID-ORCS" id="851406">
    <property type="hits" value="0 hits in 10 CRISPR screens"/>
</dbReference>
<dbReference type="PRO" id="PR:Q12142"/>
<dbReference type="Proteomes" id="UP000002311">
    <property type="component" value="Chromosome IV"/>
</dbReference>
<dbReference type="RNAct" id="Q12142">
    <property type="molecule type" value="protein"/>
</dbReference>
<dbReference type="GO" id="GO:0005776">
    <property type="term" value="C:autophagosome"/>
    <property type="evidence" value="ECO:0000318"/>
    <property type="project" value="GO_Central"/>
</dbReference>
<dbReference type="GO" id="GO:0030659">
    <property type="term" value="C:cytoplasmic vesicle membrane"/>
    <property type="evidence" value="ECO:0000314"/>
    <property type="project" value="SGD"/>
</dbReference>
<dbReference type="GO" id="GO:0005789">
    <property type="term" value="C:endoplasmic reticulum membrane"/>
    <property type="evidence" value="ECO:0007669"/>
    <property type="project" value="UniProtKB-SubCell"/>
</dbReference>
<dbReference type="GO" id="GO:0000139">
    <property type="term" value="C:Golgi membrane"/>
    <property type="evidence" value="ECO:0007669"/>
    <property type="project" value="UniProtKB-SubCell"/>
</dbReference>
<dbReference type="GO" id="GO:0031966">
    <property type="term" value="C:mitochondrial membrane"/>
    <property type="evidence" value="ECO:0007669"/>
    <property type="project" value="UniProtKB-SubCell"/>
</dbReference>
<dbReference type="GO" id="GO:0005739">
    <property type="term" value="C:mitochondrion"/>
    <property type="evidence" value="ECO:0000314"/>
    <property type="project" value="SGD"/>
</dbReference>
<dbReference type="GO" id="GO:0061908">
    <property type="term" value="C:phagophore"/>
    <property type="evidence" value="ECO:0000314"/>
    <property type="project" value="SGD"/>
</dbReference>
<dbReference type="GO" id="GO:0000407">
    <property type="term" value="C:phagophore assembly site"/>
    <property type="evidence" value="ECO:0000314"/>
    <property type="project" value="UniProtKB"/>
</dbReference>
<dbReference type="GO" id="GO:0034045">
    <property type="term" value="C:phagophore assembly site membrane"/>
    <property type="evidence" value="ECO:0007669"/>
    <property type="project" value="UniProtKB-SubCell"/>
</dbReference>
<dbReference type="GO" id="GO:0017128">
    <property type="term" value="F:phospholipid scramblase activity"/>
    <property type="evidence" value="ECO:0000314"/>
    <property type="project" value="UniProtKB"/>
</dbReference>
<dbReference type="GO" id="GO:0000045">
    <property type="term" value="P:autophagosome assembly"/>
    <property type="evidence" value="ECO:0000314"/>
    <property type="project" value="UniProtKB"/>
</dbReference>
<dbReference type="GO" id="GO:0006914">
    <property type="term" value="P:autophagy"/>
    <property type="evidence" value="ECO:0000315"/>
    <property type="project" value="UniProtKB"/>
</dbReference>
<dbReference type="GO" id="GO:0032258">
    <property type="term" value="P:cytoplasm to vacuole targeting by the Cvt pathway"/>
    <property type="evidence" value="ECO:0000315"/>
    <property type="project" value="SGD"/>
</dbReference>
<dbReference type="GO" id="GO:0000423">
    <property type="term" value="P:mitophagy"/>
    <property type="evidence" value="ECO:0000315"/>
    <property type="project" value="SGD"/>
</dbReference>
<dbReference type="GO" id="GO:0044804">
    <property type="term" value="P:nucleophagy"/>
    <property type="evidence" value="ECO:0000315"/>
    <property type="project" value="SGD"/>
</dbReference>
<dbReference type="GO" id="GO:0045332">
    <property type="term" value="P:phospholipid translocation"/>
    <property type="evidence" value="ECO:0000314"/>
    <property type="project" value="SGD"/>
</dbReference>
<dbReference type="GO" id="GO:0034727">
    <property type="term" value="P:piecemeal microautophagy of the nucleus"/>
    <property type="evidence" value="ECO:0000315"/>
    <property type="project" value="SGD"/>
</dbReference>
<dbReference type="GO" id="GO:0034497">
    <property type="term" value="P:protein localization to phagophore assembly site"/>
    <property type="evidence" value="ECO:0000315"/>
    <property type="project" value="SGD"/>
</dbReference>
<dbReference type="GO" id="GO:0061709">
    <property type="term" value="P:reticulophagy"/>
    <property type="evidence" value="ECO:0000315"/>
    <property type="project" value="SGD"/>
</dbReference>
<dbReference type="InterPro" id="IPR007241">
    <property type="entry name" value="Autophagy-rel_prot_9"/>
</dbReference>
<dbReference type="PANTHER" id="PTHR13038">
    <property type="entry name" value="APG9 AUTOPHAGY 9"/>
    <property type="match status" value="1"/>
</dbReference>
<dbReference type="PANTHER" id="PTHR13038:SF10">
    <property type="entry name" value="AUTOPHAGY-RELATED PROTEIN 9"/>
    <property type="match status" value="1"/>
</dbReference>
<dbReference type="Pfam" id="PF04109">
    <property type="entry name" value="ATG9"/>
    <property type="match status" value="1"/>
</dbReference>
<name>ATG9_YEAST</name>
<organism>
    <name type="scientific">Saccharomyces cerevisiae (strain ATCC 204508 / S288c)</name>
    <name type="common">Baker's yeast</name>
    <dbReference type="NCBI Taxonomy" id="559292"/>
    <lineage>
        <taxon>Eukaryota</taxon>
        <taxon>Fungi</taxon>
        <taxon>Dikarya</taxon>
        <taxon>Ascomycota</taxon>
        <taxon>Saccharomycotina</taxon>
        <taxon>Saccharomycetes</taxon>
        <taxon>Saccharomycetales</taxon>
        <taxon>Saccharomycetaceae</taxon>
        <taxon>Saccharomyces</taxon>
    </lineage>
</organism>